<organism>
    <name type="scientific">Dictyostelium discoideum</name>
    <name type="common">Social amoeba</name>
    <dbReference type="NCBI Taxonomy" id="44689"/>
    <lineage>
        <taxon>Eukaryota</taxon>
        <taxon>Amoebozoa</taxon>
        <taxon>Evosea</taxon>
        <taxon>Eumycetozoa</taxon>
        <taxon>Dictyostelia</taxon>
        <taxon>Dictyosteliales</taxon>
        <taxon>Dictyosteliaceae</taxon>
        <taxon>Dictyostelium</taxon>
    </lineage>
</organism>
<gene>
    <name type="primary">cpnF</name>
    <name type="ORF">DDB_G0291498</name>
</gene>
<proteinExistence type="evidence at transcript level"/>
<reference key="1">
    <citation type="journal article" date="2005" name="Nature">
        <title>The genome of the social amoeba Dictyostelium discoideum.</title>
        <authorList>
            <person name="Eichinger L."/>
            <person name="Pachebat J.A."/>
            <person name="Gloeckner G."/>
            <person name="Rajandream M.A."/>
            <person name="Sucgang R."/>
            <person name="Berriman M."/>
            <person name="Song J."/>
            <person name="Olsen R."/>
            <person name="Szafranski K."/>
            <person name="Xu Q."/>
            <person name="Tunggal B."/>
            <person name="Kummerfeld S."/>
            <person name="Madera M."/>
            <person name="Konfortov B.A."/>
            <person name="Rivero F."/>
            <person name="Bankier A.T."/>
            <person name="Lehmann R."/>
            <person name="Hamlin N."/>
            <person name="Davies R."/>
            <person name="Gaudet P."/>
            <person name="Fey P."/>
            <person name="Pilcher K."/>
            <person name="Chen G."/>
            <person name="Saunders D."/>
            <person name="Sodergren E.J."/>
            <person name="Davis P."/>
            <person name="Kerhornou A."/>
            <person name="Nie X."/>
            <person name="Hall N."/>
            <person name="Anjard C."/>
            <person name="Hemphill L."/>
            <person name="Bason N."/>
            <person name="Farbrother P."/>
            <person name="Desany B."/>
            <person name="Just E."/>
            <person name="Morio T."/>
            <person name="Rost R."/>
            <person name="Churcher C.M."/>
            <person name="Cooper J."/>
            <person name="Haydock S."/>
            <person name="van Driessche N."/>
            <person name="Cronin A."/>
            <person name="Goodhead I."/>
            <person name="Muzny D.M."/>
            <person name="Mourier T."/>
            <person name="Pain A."/>
            <person name="Lu M."/>
            <person name="Harper D."/>
            <person name="Lindsay R."/>
            <person name="Hauser H."/>
            <person name="James K.D."/>
            <person name="Quiles M."/>
            <person name="Madan Babu M."/>
            <person name="Saito T."/>
            <person name="Buchrieser C."/>
            <person name="Wardroper A."/>
            <person name="Felder M."/>
            <person name="Thangavelu M."/>
            <person name="Johnson D."/>
            <person name="Knights A."/>
            <person name="Loulseged H."/>
            <person name="Mungall K.L."/>
            <person name="Oliver K."/>
            <person name="Price C."/>
            <person name="Quail M.A."/>
            <person name="Urushihara H."/>
            <person name="Hernandez J."/>
            <person name="Rabbinowitsch E."/>
            <person name="Steffen D."/>
            <person name="Sanders M."/>
            <person name="Ma J."/>
            <person name="Kohara Y."/>
            <person name="Sharp S."/>
            <person name="Simmonds M.N."/>
            <person name="Spiegler S."/>
            <person name="Tivey A."/>
            <person name="Sugano S."/>
            <person name="White B."/>
            <person name="Walker D."/>
            <person name="Woodward J.R."/>
            <person name="Winckler T."/>
            <person name="Tanaka Y."/>
            <person name="Shaulsky G."/>
            <person name="Schleicher M."/>
            <person name="Weinstock G.M."/>
            <person name="Rosenthal A."/>
            <person name="Cox E.C."/>
            <person name="Chisholm R.L."/>
            <person name="Gibbs R.A."/>
            <person name="Loomis W.F."/>
            <person name="Platzer M."/>
            <person name="Kay R.R."/>
            <person name="Williams J.G."/>
            <person name="Dear P.H."/>
            <person name="Noegel A.A."/>
            <person name="Barrell B.G."/>
            <person name="Kuspa A."/>
        </authorList>
    </citation>
    <scope>NUCLEOTIDE SEQUENCE [LARGE SCALE GENOMIC DNA]</scope>
    <source>
        <strain>AX4</strain>
    </source>
</reference>
<reference key="2">
    <citation type="journal article" date="2007" name="Eukaryot. Cell">
        <title>Copine A is required for cytokinesis, contractile vacuole function, and development in Dictyostelium.</title>
        <authorList>
            <person name="Damer C.K."/>
            <person name="Bayeva M."/>
            <person name="Kim P.S."/>
            <person name="Ho L.K."/>
            <person name="Eberhardt E.S."/>
            <person name="Socec C.I."/>
            <person name="Lee J.S."/>
            <person name="Bruce E.A."/>
            <person name="Goldman-Yassen A.E."/>
            <person name="Naliboff L.C."/>
        </authorList>
    </citation>
    <scope>DEVELOPMENTAL STAGE</scope>
</reference>
<dbReference type="EMBL" id="AAFI02000177">
    <property type="protein sequence ID" value="EAS66821.1"/>
    <property type="molecule type" value="Genomic_DNA"/>
</dbReference>
<dbReference type="RefSeq" id="XP_001134504.1">
    <property type="nucleotide sequence ID" value="XM_001134504.1"/>
</dbReference>
<dbReference type="SMR" id="Q1ZXB3"/>
<dbReference type="FunCoup" id="Q1ZXB3">
    <property type="interactions" value="3"/>
</dbReference>
<dbReference type="STRING" id="44689.Q1ZXB3"/>
<dbReference type="PaxDb" id="44689-DDB0233133"/>
<dbReference type="EnsemblProtists" id="EAS66821">
    <property type="protein sequence ID" value="EAS66821"/>
    <property type="gene ID" value="DDB_G0291498"/>
</dbReference>
<dbReference type="GeneID" id="8628206"/>
<dbReference type="KEGG" id="ddi:DDB_G0291498"/>
<dbReference type="dictyBase" id="DDB_G0291498">
    <property type="gene designation" value="cpnF"/>
</dbReference>
<dbReference type="VEuPathDB" id="AmoebaDB:DDB_G0291498"/>
<dbReference type="eggNOG" id="KOG1327">
    <property type="taxonomic scope" value="Eukaryota"/>
</dbReference>
<dbReference type="HOGENOM" id="CLU_030908_0_0_1"/>
<dbReference type="InParanoid" id="Q1ZXB3"/>
<dbReference type="OMA" id="QCANVPI"/>
<dbReference type="PhylomeDB" id="Q1ZXB3"/>
<dbReference type="Reactome" id="R-DDI-1483206">
    <property type="pathway name" value="Glycerophospholipid biosynthesis"/>
</dbReference>
<dbReference type="Reactome" id="R-DDI-6798695">
    <property type="pathway name" value="Neutrophil degranulation"/>
</dbReference>
<dbReference type="PRO" id="PR:Q1ZXB3"/>
<dbReference type="Proteomes" id="UP000002195">
    <property type="component" value="Chromosome 6"/>
</dbReference>
<dbReference type="GO" id="GO:0005829">
    <property type="term" value="C:cytosol"/>
    <property type="evidence" value="ECO:0000314"/>
    <property type="project" value="dictyBase"/>
</dbReference>
<dbReference type="GO" id="GO:0005634">
    <property type="term" value="C:nucleus"/>
    <property type="evidence" value="ECO:0000314"/>
    <property type="project" value="dictyBase"/>
</dbReference>
<dbReference type="GO" id="GO:0031090">
    <property type="term" value="C:organelle membrane"/>
    <property type="evidence" value="ECO:0000314"/>
    <property type="project" value="dictyBase"/>
</dbReference>
<dbReference type="GO" id="GO:0005886">
    <property type="term" value="C:plasma membrane"/>
    <property type="evidence" value="ECO:0000318"/>
    <property type="project" value="GO_Central"/>
</dbReference>
<dbReference type="GO" id="GO:0005544">
    <property type="term" value="F:calcium-dependent phospholipid binding"/>
    <property type="evidence" value="ECO:0000318"/>
    <property type="project" value="GO_Central"/>
</dbReference>
<dbReference type="GO" id="GO:0071277">
    <property type="term" value="P:cellular response to calcium ion"/>
    <property type="evidence" value="ECO:0000318"/>
    <property type="project" value="GO_Central"/>
</dbReference>
<dbReference type="CDD" id="cd04048">
    <property type="entry name" value="C2A_Copine"/>
    <property type="match status" value="1"/>
</dbReference>
<dbReference type="CDD" id="cd04047">
    <property type="entry name" value="C2B_Copine"/>
    <property type="match status" value="1"/>
</dbReference>
<dbReference type="Gene3D" id="2.60.40.150">
    <property type="entry name" value="C2 domain"/>
    <property type="match status" value="1"/>
</dbReference>
<dbReference type="InterPro" id="IPR000008">
    <property type="entry name" value="C2_dom"/>
</dbReference>
<dbReference type="InterPro" id="IPR035892">
    <property type="entry name" value="C2_domain_sf"/>
</dbReference>
<dbReference type="InterPro" id="IPR037768">
    <property type="entry name" value="C2B_Copine"/>
</dbReference>
<dbReference type="InterPro" id="IPR045052">
    <property type="entry name" value="Copine"/>
</dbReference>
<dbReference type="InterPro" id="IPR010734">
    <property type="entry name" value="Copine_C"/>
</dbReference>
<dbReference type="InterPro" id="IPR002035">
    <property type="entry name" value="VWF_A"/>
</dbReference>
<dbReference type="InterPro" id="IPR036465">
    <property type="entry name" value="vWFA_dom_sf"/>
</dbReference>
<dbReference type="PANTHER" id="PTHR10857">
    <property type="entry name" value="COPINE"/>
    <property type="match status" value="1"/>
</dbReference>
<dbReference type="PANTHER" id="PTHR10857:SF30">
    <property type="entry name" value="COPINE-B-RELATED"/>
    <property type="match status" value="1"/>
</dbReference>
<dbReference type="Pfam" id="PF00168">
    <property type="entry name" value="C2"/>
    <property type="match status" value="1"/>
</dbReference>
<dbReference type="Pfam" id="PF07002">
    <property type="entry name" value="Copine"/>
    <property type="match status" value="1"/>
</dbReference>
<dbReference type="SMART" id="SM00239">
    <property type="entry name" value="C2"/>
    <property type="match status" value="2"/>
</dbReference>
<dbReference type="SUPFAM" id="SSF49562">
    <property type="entry name" value="C2 domain (Calcium/lipid-binding domain, CaLB)"/>
    <property type="match status" value="1"/>
</dbReference>
<dbReference type="SUPFAM" id="SSF53300">
    <property type="entry name" value="vWA-like"/>
    <property type="match status" value="1"/>
</dbReference>
<dbReference type="PROSITE" id="PS50004">
    <property type="entry name" value="C2"/>
    <property type="match status" value="2"/>
</dbReference>
<dbReference type="PROSITE" id="PS50234">
    <property type="entry name" value="VWFA"/>
    <property type="match status" value="1"/>
</dbReference>
<protein>
    <recommendedName>
        <fullName>Copine-F</fullName>
    </recommendedName>
</protein>
<evidence type="ECO:0000255" key="1">
    <source>
        <dbReference type="PROSITE-ProRule" id="PRU00041"/>
    </source>
</evidence>
<evidence type="ECO:0000255" key="2">
    <source>
        <dbReference type="PROSITE-ProRule" id="PRU00219"/>
    </source>
</evidence>
<evidence type="ECO:0000269" key="3">
    <source>
    </source>
</evidence>
<evidence type="ECO:0000305" key="4"/>
<feature type="chain" id="PRO_0000330659" description="Copine-F">
    <location>
        <begin position="1"/>
        <end position="550"/>
    </location>
</feature>
<feature type="domain" description="C2 1" evidence="1">
    <location>
        <begin position="1"/>
        <end position="115"/>
    </location>
</feature>
<feature type="domain" description="C2 2" evidence="1">
    <location>
        <begin position="123"/>
        <end position="246"/>
    </location>
</feature>
<feature type="domain" description="VWFA" evidence="2">
    <location>
        <begin position="296"/>
        <end position="521"/>
    </location>
</feature>
<comment type="developmental stage">
    <text evidence="3">Expressed at relatively high levels in vegetative cells. The expression goes down until the 10th hour of development and then plateau until the 16th hour.</text>
</comment>
<comment type="similarity">
    <text evidence="4">Belongs to the copine family.</text>
</comment>
<keyword id="KW-1185">Reference proteome</keyword>
<keyword id="KW-0677">Repeat</keyword>
<name>CPNF_DICDI</name>
<accession>Q1ZXB3</accession>
<sequence length="550" mass="62897">MAETIRPISKIELRFKLADIKKPSSQIIVYCNSGDSKRFDLIGATERIDNKSEPFFNTTINIDYYFESVQKLYLLAINHNLKTLDFTKIDQLDVVGEFTPTIGDLISRDGKRLIGDIKDKDKITGKIEITAEEIYETGHNIILQLKGTKLDKKDLFSSDPYFKIYKSSPSGNSIVFESSVIKNNINPIFDPIVIRLQELNGGCMFRELTFEFWDHNDIVDDELIGSFRTNTDEILSGIIKEFPIINQKLKSKKSNYEHSGIINFIDSRILYKPTIQDFINGNGNGNGNGDGNCLIDLMVAIDCTESNGDQKLETSLHYNVKPHQNQYIRSLLALESQLLNNFGVKLEKRVEVFGFGAVINKHPNHNFRFHYIIDDRPNTLKAGISGVIELYDKAIPKIQFTSPTKISSIIEDATRYSLQDFHSTQLKYSILLILIDSDITDYESTVDEIVEASKAPLSIIFIGVGEYSFQNIPQLDGEKNGNIRLIGRFDRKQIRDNVHFISFKEFSINQIDFQNEILRKLPNQLTEFMEFKNYLPNGLSYTQTEIKKIK</sequence>